<proteinExistence type="evidence at transcript level"/>
<dbReference type="EMBL" id="Z49190">
    <property type="protein sequence ID" value="CAA89049.1"/>
    <property type="molecule type" value="mRNA"/>
</dbReference>
<dbReference type="PIR" id="T14566">
    <property type="entry name" value="T14566"/>
</dbReference>
<dbReference type="SMR" id="Q39434"/>
<dbReference type="KEGG" id="bvg:104900042"/>
<dbReference type="OMA" id="GNGPPTQ"/>
<dbReference type="PhylomeDB" id="Q39434"/>
<dbReference type="GO" id="GO:0005886">
    <property type="term" value="C:plasma membrane"/>
    <property type="evidence" value="ECO:0007669"/>
    <property type="project" value="UniProtKB-SubCell"/>
</dbReference>
<dbReference type="GO" id="GO:0005525">
    <property type="term" value="F:GTP binding"/>
    <property type="evidence" value="ECO:0007669"/>
    <property type="project" value="UniProtKB-KW"/>
</dbReference>
<dbReference type="GO" id="GO:0003924">
    <property type="term" value="F:GTPase activity"/>
    <property type="evidence" value="ECO:0007669"/>
    <property type="project" value="InterPro"/>
</dbReference>
<dbReference type="CDD" id="cd01868">
    <property type="entry name" value="Rab11_like"/>
    <property type="match status" value="1"/>
</dbReference>
<dbReference type="FunFam" id="3.40.50.300:FF:000067">
    <property type="entry name" value="ras-related protein RABA1f"/>
    <property type="match status" value="1"/>
</dbReference>
<dbReference type="Gene3D" id="3.40.50.300">
    <property type="entry name" value="P-loop containing nucleotide triphosphate hydrolases"/>
    <property type="match status" value="1"/>
</dbReference>
<dbReference type="InterPro" id="IPR027417">
    <property type="entry name" value="P-loop_NTPase"/>
</dbReference>
<dbReference type="InterPro" id="IPR050209">
    <property type="entry name" value="Rab_GTPases_membrane_traffic"/>
</dbReference>
<dbReference type="InterPro" id="IPR005225">
    <property type="entry name" value="Small_GTP-bd"/>
</dbReference>
<dbReference type="InterPro" id="IPR001806">
    <property type="entry name" value="Small_GTPase"/>
</dbReference>
<dbReference type="NCBIfam" id="TIGR00231">
    <property type="entry name" value="small_GTP"/>
    <property type="match status" value="1"/>
</dbReference>
<dbReference type="PANTHER" id="PTHR47979">
    <property type="entry name" value="DRAB11-RELATED"/>
    <property type="match status" value="1"/>
</dbReference>
<dbReference type="Pfam" id="PF00071">
    <property type="entry name" value="Ras"/>
    <property type="match status" value="1"/>
</dbReference>
<dbReference type="PRINTS" id="PR00449">
    <property type="entry name" value="RASTRNSFRMNG"/>
</dbReference>
<dbReference type="SMART" id="SM00177">
    <property type="entry name" value="ARF"/>
    <property type="match status" value="1"/>
</dbReference>
<dbReference type="SMART" id="SM00175">
    <property type="entry name" value="RAB"/>
    <property type="match status" value="1"/>
</dbReference>
<dbReference type="SMART" id="SM00176">
    <property type="entry name" value="RAN"/>
    <property type="match status" value="1"/>
</dbReference>
<dbReference type="SMART" id="SM00173">
    <property type="entry name" value="RAS"/>
    <property type="match status" value="1"/>
</dbReference>
<dbReference type="SMART" id="SM00174">
    <property type="entry name" value="RHO"/>
    <property type="match status" value="1"/>
</dbReference>
<dbReference type="SUPFAM" id="SSF52540">
    <property type="entry name" value="P-loop containing nucleoside triphosphate hydrolases"/>
    <property type="match status" value="1"/>
</dbReference>
<dbReference type="PROSITE" id="PS51419">
    <property type="entry name" value="RAB"/>
    <property type="match status" value="1"/>
</dbReference>
<sequence>MANRVDHEYDYLFKIVLIGDSGVGKSNILSRFTRNEFCLESKSTIGVEFATRTLQVEGKTVKAQIWDTAGQERYRAITSAYYRGAVGALLVYDITKRQTFDNVQRWLRELRDHADSNIVIMMAGNKSDLKHLRAVSEEDGQALAEKEGLSFLETSALEAVNIEKAFQTILTEIYHIISKKALAAQEASSNLPGQGTTINVADASANQRRSCCST</sequence>
<organism>
    <name type="scientific">Beta vulgaris</name>
    <name type="common">Sugar beet</name>
    <dbReference type="NCBI Taxonomy" id="161934"/>
    <lineage>
        <taxon>Eukaryota</taxon>
        <taxon>Viridiplantae</taxon>
        <taxon>Streptophyta</taxon>
        <taxon>Embryophyta</taxon>
        <taxon>Tracheophyta</taxon>
        <taxon>Spermatophyta</taxon>
        <taxon>Magnoliopsida</taxon>
        <taxon>eudicotyledons</taxon>
        <taxon>Gunneridae</taxon>
        <taxon>Pentapetalae</taxon>
        <taxon>Caryophyllales</taxon>
        <taxon>Chenopodiaceae</taxon>
        <taxon>Betoideae</taxon>
        <taxon>Beta</taxon>
    </lineage>
</organism>
<keyword id="KW-1003">Cell membrane</keyword>
<keyword id="KW-0342">GTP-binding</keyword>
<keyword id="KW-0449">Lipoprotein</keyword>
<keyword id="KW-0472">Membrane</keyword>
<keyword id="KW-0547">Nucleotide-binding</keyword>
<keyword id="KW-0636">Prenylation</keyword>
<comment type="subcellular location">
    <subcellularLocation>
        <location evidence="2">Cell membrane</location>
        <topology evidence="2">Lipid-anchor</topology>
        <orientation evidence="2">Cytoplasmic side</orientation>
    </subcellularLocation>
</comment>
<comment type="similarity">
    <text evidence="2">Belongs to the small GTPase superfamily. Rab family.</text>
</comment>
<gene>
    <name type="primary">RAB2BV</name>
</gene>
<name>RB2BV_BETVU</name>
<feature type="chain" id="PRO_0000121166" description="Ras-related protein Rab2BV">
    <location>
        <begin position="1"/>
        <end position="214"/>
    </location>
</feature>
<feature type="short sequence motif" description="Effector region" evidence="1">
    <location>
        <begin position="41"/>
        <end position="49"/>
    </location>
</feature>
<feature type="binding site" evidence="1">
    <location>
        <begin position="19"/>
        <end position="26"/>
    </location>
    <ligand>
        <name>GTP</name>
        <dbReference type="ChEBI" id="CHEBI:37565"/>
    </ligand>
</feature>
<feature type="binding site" evidence="1">
    <location>
        <begin position="67"/>
        <end position="71"/>
    </location>
    <ligand>
        <name>GTP</name>
        <dbReference type="ChEBI" id="CHEBI:37565"/>
    </ligand>
</feature>
<feature type="binding site" evidence="1">
    <location>
        <begin position="125"/>
        <end position="128"/>
    </location>
    <ligand>
        <name>GTP</name>
        <dbReference type="ChEBI" id="CHEBI:37565"/>
    </ligand>
</feature>
<feature type="lipid moiety-binding region" description="S-geranylgeranyl cysteine" evidence="1">
    <location>
        <position position="211"/>
    </location>
</feature>
<feature type="lipid moiety-binding region" description="S-geranylgeranyl cysteine" evidence="1">
    <location>
        <position position="212"/>
    </location>
</feature>
<protein>
    <recommendedName>
        <fullName>Ras-related protein Rab2BV</fullName>
    </recommendedName>
</protein>
<reference key="1">
    <citation type="journal article" date="1996" name="C. R. Acad. Sci. III, Sci. Vie">
        <title>Molecular cloning and structural analysis of cDNAs that encode 3 small GTP-binding proteins from sugar beet.</title>
        <authorList>
            <person name="Dallery E."/>
            <person name="Quief S."/>
            <person name="Ben-Jilany K.E."/>
            <person name="Kerckaert J.-P."/>
            <person name="Hagege D."/>
        </authorList>
    </citation>
    <scope>NUCLEOTIDE SEQUENCE [MRNA]</scope>
    <source>
        <strain>cv. D100 KS 38080</strain>
    </source>
</reference>
<accession>Q39434</accession>
<evidence type="ECO:0000250" key="1"/>
<evidence type="ECO:0000305" key="2"/>